<reference key="1">
    <citation type="journal article" date="2005" name="Science">
        <title>The genome of the basidiomycetous yeast and human pathogen Cryptococcus neoformans.</title>
        <authorList>
            <person name="Loftus B.J."/>
            <person name="Fung E."/>
            <person name="Roncaglia P."/>
            <person name="Rowley D."/>
            <person name="Amedeo P."/>
            <person name="Bruno D."/>
            <person name="Vamathevan J."/>
            <person name="Miranda M."/>
            <person name="Anderson I.J."/>
            <person name="Fraser J.A."/>
            <person name="Allen J.E."/>
            <person name="Bosdet I.E."/>
            <person name="Brent M.R."/>
            <person name="Chiu R."/>
            <person name="Doering T.L."/>
            <person name="Donlin M.J."/>
            <person name="D'Souza C.A."/>
            <person name="Fox D.S."/>
            <person name="Grinberg V."/>
            <person name="Fu J."/>
            <person name="Fukushima M."/>
            <person name="Haas B.J."/>
            <person name="Huang J.C."/>
            <person name="Janbon G."/>
            <person name="Jones S.J.M."/>
            <person name="Koo H.L."/>
            <person name="Krzywinski M.I."/>
            <person name="Kwon-Chung K.J."/>
            <person name="Lengeler K.B."/>
            <person name="Maiti R."/>
            <person name="Marra M.A."/>
            <person name="Marra R.E."/>
            <person name="Mathewson C.A."/>
            <person name="Mitchell T.G."/>
            <person name="Pertea M."/>
            <person name="Riggs F.R."/>
            <person name="Salzberg S.L."/>
            <person name="Schein J.E."/>
            <person name="Shvartsbeyn A."/>
            <person name="Shin H."/>
            <person name="Shumway M."/>
            <person name="Specht C.A."/>
            <person name="Suh B.B."/>
            <person name="Tenney A."/>
            <person name="Utterback T.R."/>
            <person name="Wickes B.L."/>
            <person name="Wortman J.R."/>
            <person name="Wye N.H."/>
            <person name="Kronstad J.W."/>
            <person name="Lodge J.K."/>
            <person name="Heitman J."/>
            <person name="Davis R.W."/>
            <person name="Fraser C.M."/>
            <person name="Hyman R.W."/>
        </authorList>
    </citation>
    <scope>NUCLEOTIDE SEQUENCE [LARGE SCALE GENOMIC DNA]</scope>
    <source>
        <strain>JEC21 / ATCC MYA-565</strain>
    </source>
</reference>
<accession>P0CS58</accession>
<accession>Q55P42</accession>
<accession>Q5KEB4</accession>
<name>GET1_CRYNJ</name>
<keyword id="KW-0175">Coiled coil</keyword>
<keyword id="KW-0256">Endoplasmic reticulum</keyword>
<keyword id="KW-0472">Membrane</keyword>
<keyword id="KW-1185">Reference proteome</keyword>
<keyword id="KW-0812">Transmembrane</keyword>
<keyword id="KW-1133">Transmembrane helix</keyword>
<keyword id="KW-0813">Transport</keyword>
<comment type="function">
    <text evidence="1">Required for the post-translational delivery of tail-anchored (TA) proteins to the endoplasmic reticulum. Acts as a membrane receptor for soluble GET3, which recognizes and selectively binds the transmembrane domain of TA proteins in the cytosol.</text>
</comment>
<comment type="subunit">
    <text evidence="1">Interacts with GET3.</text>
</comment>
<comment type="subcellular location">
    <subcellularLocation>
        <location evidence="1">Endoplasmic reticulum membrane</location>
        <topology evidence="1">Multi-pass membrane protein</topology>
    </subcellularLocation>
</comment>
<comment type="similarity">
    <text evidence="1">Belongs to the WRB/GET1 family.</text>
</comment>
<evidence type="ECO:0000255" key="1">
    <source>
        <dbReference type="HAMAP-Rule" id="MF_03113"/>
    </source>
</evidence>
<evidence type="ECO:0000256" key="2">
    <source>
        <dbReference type="SAM" id="MobiDB-lite"/>
    </source>
</evidence>
<feature type="chain" id="PRO_0000388592" description="Protein GET1">
    <location>
        <begin position="1"/>
        <end position="215"/>
    </location>
</feature>
<feature type="topological domain" description="Lumenal" evidence="1">
    <location>
        <begin position="1"/>
        <end position="4"/>
    </location>
</feature>
<feature type="transmembrane region" description="Helical" evidence="1">
    <location>
        <begin position="5"/>
        <end position="24"/>
    </location>
</feature>
<feature type="topological domain" description="Cytoplasmic" evidence="1">
    <location>
        <begin position="25"/>
        <end position="108"/>
    </location>
</feature>
<feature type="transmembrane region" description="Helical" evidence="1">
    <location>
        <begin position="109"/>
        <end position="129"/>
    </location>
</feature>
<feature type="topological domain" description="Lumenal" evidence="1">
    <location>
        <begin position="130"/>
        <end position="153"/>
    </location>
</feature>
<feature type="transmembrane region" description="Helical" evidence="1">
    <location>
        <begin position="154"/>
        <end position="170"/>
    </location>
</feature>
<feature type="topological domain" description="Cytoplasmic" evidence="1">
    <location>
        <begin position="171"/>
        <end position="215"/>
    </location>
</feature>
<feature type="region of interest" description="Disordered" evidence="2">
    <location>
        <begin position="182"/>
        <end position="202"/>
    </location>
</feature>
<feature type="coiled-coil region" evidence="1">
    <location>
        <begin position="73"/>
        <end position="94"/>
    </location>
</feature>
<protein>
    <recommendedName>
        <fullName evidence="1">Protein GET1</fullName>
    </recommendedName>
    <alternativeName>
        <fullName evidence="1">Guided entry of tail-anchored proteins 1</fullName>
    </alternativeName>
</protein>
<sequence length="215" mass="23909">MINLALVIFLCTLLNQIVSWVGKSVLQEIAFTAYSWVFLSGTAAKQRKLRKQVLEDKAELGRTSSQDEFAKWAKLRRKLDKGLADLEKTNNTLSSSRSSFSKKFSTLLWLMTTGAQFLLSWWFRKQPIFWLPEGWVPYPVAWLLSFPSAPIGSVSSGAWGAICRRVLSTLQEIIQSLLAPSPAATGPVPTGPSSAKNDQPEAKIEALALEHEKLD</sequence>
<gene>
    <name evidence="1" type="primary">GET1</name>
    <name type="ordered locus">CNG01090</name>
</gene>
<dbReference type="EMBL" id="AE017347">
    <property type="protein sequence ID" value="AAW44562.2"/>
    <property type="molecule type" value="Genomic_DNA"/>
</dbReference>
<dbReference type="RefSeq" id="XP_571869.1">
    <property type="nucleotide sequence ID" value="XM_571869.1"/>
</dbReference>
<dbReference type="SMR" id="P0CS58"/>
<dbReference type="FunCoup" id="P0CS58">
    <property type="interactions" value="201"/>
</dbReference>
<dbReference type="STRING" id="214684.P0CS58"/>
<dbReference type="PaxDb" id="214684-P0CS58"/>
<dbReference type="EnsemblFungi" id="AAW44562">
    <property type="protein sequence ID" value="AAW44562"/>
    <property type="gene ID" value="CNG01090"/>
</dbReference>
<dbReference type="VEuPathDB" id="FungiDB:CNG01090"/>
<dbReference type="InParanoid" id="P0CS58"/>
<dbReference type="OrthoDB" id="69461at2759"/>
<dbReference type="Proteomes" id="UP000002149">
    <property type="component" value="Chromosome 7"/>
</dbReference>
<dbReference type="GO" id="GO:0005789">
    <property type="term" value="C:endoplasmic reticulum membrane"/>
    <property type="evidence" value="ECO:0007669"/>
    <property type="project" value="UniProtKB-SubCell"/>
</dbReference>
<dbReference type="GO" id="GO:0043529">
    <property type="term" value="C:GET complex"/>
    <property type="evidence" value="ECO:0000318"/>
    <property type="project" value="GO_Central"/>
</dbReference>
<dbReference type="GO" id="GO:0043495">
    <property type="term" value="F:protein-membrane adaptor activity"/>
    <property type="evidence" value="ECO:0000318"/>
    <property type="project" value="GO_Central"/>
</dbReference>
<dbReference type="GO" id="GO:0071816">
    <property type="term" value="P:tail-anchored membrane protein insertion into ER membrane"/>
    <property type="evidence" value="ECO:0000318"/>
    <property type="project" value="GO_Central"/>
</dbReference>
<dbReference type="FunFam" id="1.10.287.660:FF:000006">
    <property type="entry name" value="Protein GET1"/>
    <property type="match status" value="1"/>
</dbReference>
<dbReference type="Gene3D" id="1.10.287.660">
    <property type="entry name" value="Helix hairpin bin"/>
    <property type="match status" value="1"/>
</dbReference>
<dbReference type="HAMAP" id="MF_03113">
    <property type="entry name" value="Get1"/>
    <property type="match status" value="1"/>
</dbReference>
<dbReference type="InterPro" id="IPR028945">
    <property type="entry name" value="Get1"/>
</dbReference>
<dbReference type="InterPro" id="IPR027538">
    <property type="entry name" value="Get1_fungi"/>
</dbReference>
<dbReference type="InterPro" id="IPR029012">
    <property type="entry name" value="Helix_hairpin_bin_sf"/>
</dbReference>
<dbReference type="PANTHER" id="PTHR42650:SF1">
    <property type="entry name" value="GUIDED ENTRY OF TAIL-ANCHORED PROTEINS FACTOR 1"/>
    <property type="match status" value="1"/>
</dbReference>
<dbReference type="PANTHER" id="PTHR42650">
    <property type="entry name" value="TAIL-ANCHORED PROTEIN INSERTION RECEPTOR WRB"/>
    <property type="match status" value="1"/>
</dbReference>
<dbReference type="Pfam" id="PF04420">
    <property type="entry name" value="CHD5"/>
    <property type="match status" value="1"/>
</dbReference>
<organism>
    <name type="scientific">Cryptococcus neoformans var. neoformans serotype D (strain JEC21 / ATCC MYA-565)</name>
    <name type="common">Filobasidiella neoformans</name>
    <dbReference type="NCBI Taxonomy" id="214684"/>
    <lineage>
        <taxon>Eukaryota</taxon>
        <taxon>Fungi</taxon>
        <taxon>Dikarya</taxon>
        <taxon>Basidiomycota</taxon>
        <taxon>Agaricomycotina</taxon>
        <taxon>Tremellomycetes</taxon>
        <taxon>Tremellales</taxon>
        <taxon>Cryptococcaceae</taxon>
        <taxon>Cryptococcus</taxon>
        <taxon>Cryptococcus neoformans species complex</taxon>
    </lineage>
</organism>
<proteinExistence type="inferred from homology"/>